<comment type="function">
    <text evidence="1">Catalyzes the formation of 6,7-dimethyl-8-ribityllumazine by condensation of 5-amino-6-(D-ribitylamino)uracil with 3,4-dihydroxy-2-butanone 4-phosphate. This is the penultimate step in the biosynthesis of riboflavin.</text>
</comment>
<comment type="catalytic activity">
    <reaction evidence="1">
        <text>(2S)-2-hydroxy-3-oxobutyl phosphate + 5-amino-6-(D-ribitylamino)uracil = 6,7-dimethyl-8-(1-D-ribityl)lumazine + phosphate + 2 H2O + H(+)</text>
        <dbReference type="Rhea" id="RHEA:26152"/>
        <dbReference type="ChEBI" id="CHEBI:15377"/>
        <dbReference type="ChEBI" id="CHEBI:15378"/>
        <dbReference type="ChEBI" id="CHEBI:15934"/>
        <dbReference type="ChEBI" id="CHEBI:43474"/>
        <dbReference type="ChEBI" id="CHEBI:58201"/>
        <dbReference type="ChEBI" id="CHEBI:58830"/>
        <dbReference type="EC" id="2.5.1.78"/>
    </reaction>
</comment>
<comment type="pathway">
    <text evidence="1">Cofactor biosynthesis; riboflavin biosynthesis; riboflavin from 2-hydroxy-3-oxobutyl phosphate and 5-amino-6-(D-ribitylamino)uracil: step 1/2.</text>
</comment>
<comment type="similarity">
    <text evidence="1">Belongs to the DMRL synthase family.</text>
</comment>
<proteinExistence type="inferred from homology"/>
<dbReference type="EC" id="2.5.1.78" evidence="1"/>
<dbReference type="EMBL" id="AE017321">
    <property type="protein sequence ID" value="AAW70780.1"/>
    <property type="molecule type" value="Genomic_DNA"/>
</dbReference>
<dbReference type="RefSeq" id="WP_011256390.1">
    <property type="nucleotide sequence ID" value="NC_006833.1"/>
</dbReference>
<dbReference type="SMR" id="Q5GT94"/>
<dbReference type="STRING" id="292805.Wbm0189"/>
<dbReference type="KEGG" id="wbm:Wbm0189"/>
<dbReference type="eggNOG" id="COG0054">
    <property type="taxonomic scope" value="Bacteria"/>
</dbReference>
<dbReference type="HOGENOM" id="CLU_089358_1_2_5"/>
<dbReference type="UniPathway" id="UPA00275">
    <property type="reaction ID" value="UER00404"/>
</dbReference>
<dbReference type="Proteomes" id="UP000000534">
    <property type="component" value="Chromosome"/>
</dbReference>
<dbReference type="GO" id="GO:0005829">
    <property type="term" value="C:cytosol"/>
    <property type="evidence" value="ECO:0007669"/>
    <property type="project" value="TreeGrafter"/>
</dbReference>
<dbReference type="GO" id="GO:0009349">
    <property type="term" value="C:riboflavin synthase complex"/>
    <property type="evidence" value="ECO:0007669"/>
    <property type="project" value="InterPro"/>
</dbReference>
<dbReference type="GO" id="GO:0000906">
    <property type="term" value="F:6,7-dimethyl-8-ribityllumazine synthase activity"/>
    <property type="evidence" value="ECO:0007669"/>
    <property type="project" value="UniProtKB-UniRule"/>
</dbReference>
<dbReference type="GO" id="GO:0009231">
    <property type="term" value="P:riboflavin biosynthetic process"/>
    <property type="evidence" value="ECO:0007669"/>
    <property type="project" value="UniProtKB-UniRule"/>
</dbReference>
<dbReference type="CDD" id="cd09209">
    <property type="entry name" value="Lumazine_synthase-I"/>
    <property type="match status" value="1"/>
</dbReference>
<dbReference type="Gene3D" id="3.40.50.960">
    <property type="entry name" value="Lumazine/riboflavin synthase"/>
    <property type="match status" value="1"/>
</dbReference>
<dbReference type="HAMAP" id="MF_00178">
    <property type="entry name" value="Lumazine_synth"/>
    <property type="match status" value="1"/>
</dbReference>
<dbReference type="InterPro" id="IPR034964">
    <property type="entry name" value="LS"/>
</dbReference>
<dbReference type="InterPro" id="IPR002180">
    <property type="entry name" value="LS/RS"/>
</dbReference>
<dbReference type="InterPro" id="IPR036467">
    <property type="entry name" value="LS/RS_sf"/>
</dbReference>
<dbReference type="NCBIfam" id="TIGR00114">
    <property type="entry name" value="lumazine-synth"/>
    <property type="match status" value="1"/>
</dbReference>
<dbReference type="NCBIfam" id="NF000814">
    <property type="entry name" value="PRK00061.2-2"/>
    <property type="match status" value="1"/>
</dbReference>
<dbReference type="PANTHER" id="PTHR21058:SF0">
    <property type="entry name" value="6,7-DIMETHYL-8-RIBITYLLUMAZINE SYNTHASE"/>
    <property type="match status" value="1"/>
</dbReference>
<dbReference type="PANTHER" id="PTHR21058">
    <property type="entry name" value="6,7-DIMETHYL-8-RIBITYLLUMAZINE SYNTHASE DMRL SYNTHASE LUMAZINE SYNTHASE"/>
    <property type="match status" value="1"/>
</dbReference>
<dbReference type="Pfam" id="PF00885">
    <property type="entry name" value="DMRL_synthase"/>
    <property type="match status" value="1"/>
</dbReference>
<dbReference type="SUPFAM" id="SSF52121">
    <property type="entry name" value="Lumazine synthase"/>
    <property type="match status" value="1"/>
</dbReference>
<protein>
    <recommendedName>
        <fullName evidence="1">6,7-dimethyl-8-ribityllumazine synthase</fullName>
        <shortName evidence="1">DMRL synthase</shortName>
        <shortName evidence="1">LS</shortName>
        <shortName evidence="1">Lumazine synthase</shortName>
        <ecNumber evidence="1">2.5.1.78</ecNumber>
    </recommendedName>
</protein>
<keyword id="KW-1185">Reference proteome</keyword>
<keyword id="KW-0686">Riboflavin biosynthesis</keyword>
<keyword id="KW-0808">Transferase</keyword>
<evidence type="ECO:0000255" key="1">
    <source>
        <dbReference type="HAMAP-Rule" id="MF_00178"/>
    </source>
</evidence>
<sequence length="142" mass="15547">MSKILIVNSIYYTEIANLLLEGATDKLKGSNASYNVIEVPGAFEIPAAILFAVKSKHFNYDGYLALGCVIRGETDHYQYICKGVIKGLNEVVMHNTVPLGMGVITADSKDKALVRADKDKKNIGGRTASAVLHMIDLYNKLR</sequence>
<accession>Q5GT94</accession>
<organism>
    <name type="scientific">Wolbachia sp. subsp. Brugia malayi (strain TRS)</name>
    <dbReference type="NCBI Taxonomy" id="292805"/>
    <lineage>
        <taxon>Bacteria</taxon>
        <taxon>Pseudomonadati</taxon>
        <taxon>Pseudomonadota</taxon>
        <taxon>Alphaproteobacteria</taxon>
        <taxon>Rickettsiales</taxon>
        <taxon>Anaplasmataceae</taxon>
        <taxon>Wolbachieae</taxon>
        <taxon>Wolbachia</taxon>
    </lineage>
</organism>
<name>RISB_WOLTR</name>
<feature type="chain" id="PRO_1000040547" description="6,7-dimethyl-8-ribityllumazine synthase">
    <location>
        <begin position="1"/>
        <end position="142"/>
    </location>
</feature>
<feature type="active site" description="Proton donor" evidence="1">
    <location>
        <position position="76"/>
    </location>
</feature>
<feature type="binding site" evidence="1">
    <location>
        <position position="11"/>
    </location>
    <ligand>
        <name>5-amino-6-(D-ribitylamino)uracil</name>
        <dbReference type="ChEBI" id="CHEBI:15934"/>
    </ligand>
</feature>
<feature type="binding site" evidence="1">
    <location>
        <begin position="42"/>
        <end position="44"/>
    </location>
    <ligand>
        <name>5-amino-6-(D-ribitylamino)uracil</name>
        <dbReference type="ChEBI" id="CHEBI:15934"/>
    </ligand>
</feature>
<feature type="binding site" evidence="1">
    <location>
        <begin position="68"/>
        <end position="70"/>
    </location>
    <ligand>
        <name>5-amino-6-(D-ribitylamino)uracil</name>
        <dbReference type="ChEBI" id="CHEBI:15934"/>
    </ligand>
</feature>
<feature type="binding site" evidence="1">
    <location>
        <begin position="73"/>
        <end position="74"/>
    </location>
    <ligand>
        <name>(2S)-2-hydroxy-3-oxobutyl phosphate</name>
        <dbReference type="ChEBI" id="CHEBI:58830"/>
    </ligand>
</feature>
<feature type="binding site" evidence="1">
    <location>
        <position position="101"/>
    </location>
    <ligand>
        <name>5-amino-6-(D-ribitylamino)uracil</name>
        <dbReference type="ChEBI" id="CHEBI:15934"/>
    </ligand>
</feature>
<feature type="binding site" evidence="1">
    <location>
        <position position="115"/>
    </location>
    <ligand>
        <name>(2S)-2-hydroxy-3-oxobutyl phosphate</name>
        <dbReference type="ChEBI" id="CHEBI:58830"/>
    </ligand>
</feature>
<reference key="1">
    <citation type="journal article" date="2005" name="PLoS Biol.">
        <title>The Wolbachia genome of Brugia malayi: endosymbiont evolution within a human pathogenic nematode.</title>
        <authorList>
            <person name="Foster J."/>
            <person name="Ganatra M."/>
            <person name="Kamal I."/>
            <person name="Ware J."/>
            <person name="Makarova K."/>
            <person name="Ivanova N."/>
            <person name="Bhattacharyya A."/>
            <person name="Kapatral V."/>
            <person name="Kumar S."/>
            <person name="Posfai J."/>
            <person name="Vincze T."/>
            <person name="Ingram J."/>
            <person name="Moran L."/>
            <person name="Lapidus A."/>
            <person name="Omelchenko M."/>
            <person name="Kyrpides N."/>
            <person name="Ghedin E."/>
            <person name="Wang S."/>
            <person name="Goltsman E."/>
            <person name="Joukov V."/>
            <person name="Ostrovskaya O."/>
            <person name="Tsukerman K."/>
            <person name="Mazur M."/>
            <person name="Comb D."/>
            <person name="Koonin E."/>
            <person name="Slatko B."/>
        </authorList>
    </citation>
    <scope>NUCLEOTIDE SEQUENCE [LARGE SCALE GENOMIC DNA]</scope>
    <source>
        <strain>TRS</strain>
    </source>
</reference>
<gene>
    <name evidence="1" type="primary">ribH</name>
    <name type="ordered locus">Wbm0189</name>
</gene>